<name>FOLD_PECCP</name>
<accession>C6DAX0</accession>
<feature type="chain" id="PRO_1000215604" description="Bifunctional protein FolD">
    <location>
        <begin position="1"/>
        <end position="287"/>
    </location>
</feature>
<feature type="binding site" evidence="1">
    <location>
        <begin position="166"/>
        <end position="168"/>
    </location>
    <ligand>
        <name>NADP(+)</name>
        <dbReference type="ChEBI" id="CHEBI:58349"/>
    </ligand>
</feature>
<feature type="binding site" evidence="1">
    <location>
        <position position="232"/>
    </location>
    <ligand>
        <name>NADP(+)</name>
        <dbReference type="ChEBI" id="CHEBI:58349"/>
    </ligand>
</feature>
<sequence length="287" mass="30892">MAAKIIDGKTIAQQVKDEVAARVTQRLAAGKRAPGLAVVLVGENPASQIYVSSKRKVCEEVGFISRSYDLPATTTESELLTLIDQLNADQAIDGILVQLPLPEGIDNTKVIERIAPSKDVDGFHPYNVGRLCQRAPLLRACTPRGIVTLLERYNIDTFGLNAVVVGASNIVGRPMSLELLLAGCTTTVTHRFTKNLRHHIENADLLVVAVGKPGFIPGEWIKPGAIVLDVGINRLESGKVVGDVEFETAQERASYISPVPGGVGPMTVATLIQNTLQACEEYHDHAE</sequence>
<gene>
    <name evidence="1" type="primary">folD</name>
    <name type="ordered locus">PC1_2931</name>
</gene>
<organism>
    <name type="scientific">Pectobacterium carotovorum subsp. carotovorum (strain PC1)</name>
    <dbReference type="NCBI Taxonomy" id="561230"/>
    <lineage>
        <taxon>Bacteria</taxon>
        <taxon>Pseudomonadati</taxon>
        <taxon>Pseudomonadota</taxon>
        <taxon>Gammaproteobacteria</taxon>
        <taxon>Enterobacterales</taxon>
        <taxon>Pectobacteriaceae</taxon>
        <taxon>Pectobacterium</taxon>
    </lineage>
</organism>
<keyword id="KW-0028">Amino-acid biosynthesis</keyword>
<keyword id="KW-0368">Histidine biosynthesis</keyword>
<keyword id="KW-0378">Hydrolase</keyword>
<keyword id="KW-0486">Methionine biosynthesis</keyword>
<keyword id="KW-0511">Multifunctional enzyme</keyword>
<keyword id="KW-0521">NADP</keyword>
<keyword id="KW-0554">One-carbon metabolism</keyword>
<keyword id="KW-0560">Oxidoreductase</keyword>
<keyword id="KW-0658">Purine biosynthesis</keyword>
<comment type="function">
    <text evidence="1">Catalyzes the oxidation of 5,10-methylenetetrahydrofolate to 5,10-methenyltetrahydrofolate and then the hydrolysis of 5,10-methenyltetrahydrofolate to 10-formyltetrahydrofolate.</text>
</comment>
<comment type="catalytic activity">
    <reaction evidence="1">
        <text>(6R)-5,10-methylene-5,6,7,8-tetrahydrofolate + NADP(+) = (6R)-5,10-methenyltetrahydrofolate + NADPH</text>
        <dbReference type="Rhea" id="RHEA:22812"/>
        <dbReference type="ChEBI" id="CHEBI:15636"/>
        <dbReference type="ChEBI" id="CHEBI:57455"/>
        <dbReference type="ChEBI" id="CHEBI:57783"/>
        <dbReference type="ChEBI" id="CHEBI:58349"/>
        <dbReference type="EC" id="1.5.1.5"/>
    </reaction>
</comment>
<comment type="catalytic activity">
    <reaction evidence="1">
        <text>(6R)-5,10-methenyltetrahydrofolate + H2O = (6R)-10-formyltetrahydrofolate + H(+)</text>
        <dbReference type="Rhea" id="RHEA:23700"/>
        <dbReference type="ChEBI" id="CHEBI:15377"/>
        <dbReference type="ChEBI" id="CHEBI:15378"/>
        <dbReference type="ChEBI" id="CHEBI:57455"/>
        <dbReference type="ChEBI" id="CHEBI:195366"/>
        <dbReference type="EC" id="3.5.4.9"/>
    </reaction>
</comment>
<comment type="pathway">
    <text evidence="1">One-carbon metabolism; tetrahydrofolate interconversion.</text>
</comment>
<comment type="subunit">
    <text evidence="1">Homodimer.</text>
</comment>
<comment type="similarity">
    <text evidence="1">Belongs to the tetrahydrofolate dehydrogenase/cyclohydrolase family.</text>
</comment>
<dbReference type="EC" id="1.5.1.5" evidence="1"/>
<dbReference type="EC" id="3.5.4.9" evidence="1"/>
<dbReference type="EMBL" id="CP001657">
    <property type="protein sequence ID" value="ACT13954.1"/>
    <property type="molecule type" value="Genomic_DNA"/>
</dbReference>
<dbReference type="RefSeq" id="WP_015841110.1">
    <property type="nucleotide sequence ID" value="NC_012917.1"/>
</dbReference>
<dbReference type="SMR" id="C6DAX0"/>
<dbReference type="STRING" id="561230.PC1_2931"/>
<dbReference type="KEGG" id="pct:PC1_2931"/>
<dbReference type="eggNOG" id="COG0190">
    <property type="taxonomic scope" value="Bacteria"/>
</dbReference>
<dbReference type="HOGENOM" id="CLU_034045_2_1_6"/>
<dbReference type="OrthoDB" id="9803580at2"/>
<dbReference type="UniPathway" id="UPA00193"/>
<dbReference type="Proteomes" id="UP000002736">
    <property type="component" value="Chromosome"/>
</dbReference>
<dbReference type="GO" id="GO:0005829">
    <property type="term" value="C:cytosol"/>
    <property type="evidence" value="ECO:0007669"/>
    <property type="project" value="TreeGrafter"/>
</dbReference>
<dbReference type="GO" id="GO:0004477">
    <property type="term" value="F:methenyltetrahydrofolate cyclohydrolase activity"/>
    <property type="evidence" value="ECO:0007669"/>
    <property type="project" value="UniProtKB-UniRule"/>
</dbReference>
<dbReference type="GO" id="GO:0004488">
    <property type="term" value="F:methylenetetrahydrofolate dehydrogenase (NADP+) activity"/>
    <property type="evidence" value="ECO:0007669"/>
    <property type="project" value="UniProtKB-UniRule"/>
</dbReference>
<dbReference type="GO" id="GO:0000105">
    <property type="term" value="P:L-histidine biosynthetic process"/>
    <property type="evidence" value="ECO:0007669"/>
    <property type="project" value="UniProtKB-KW"/>
</dbReference>
<dbReference type="GO" id="GO:0009086">
    <property type="term" value="P:methionine biosynthetic process"/>
    <property type="evidence" value="ECO:0007669"/>
    <property type="project" value="UniProtKB-KW"/>
</dbReference>
<dbReference type="GO" id="GO:0006164">
    <property type="term" value="P:purine nucleotide biosynthetic process"/>
    <property type="evidence" value="ECO:0007669"/>
    <property type="project" value="UniProtKB-KW"/>
</dbReference>
<dbReference type="GO" id="GO:0035999">
    <property type="term" value="P:tetrahydrofolate interconversion"/>
    <property type="evidence" value="ECO:0007669"/>
    <property type="project" value="UniProtKB-UniRule"/>
</dbReference>
<dbReference type="CDD" id="cd01080">
    <property type="entry name" value="NAD_bind_m-THF_DH_Cyclohyd"/>
    <property type="match status" value="1"/>
</dbReference>
<dbReference type="FunFam" id="3.40.50.10860:FF:000001">
    <property type="entry name" value="Bifunctional protein FolD"/>
    <property type="match status" value="1"/>
</dbReference>
<dbReference type="FunFam" id="3.40.50.720:FF:000006">
    <property type="entry name" value="Bifunctional protein FolD"/>
    <property type="match status" value="1"/>
</dbReference>
<dbReference type="Gene3D" id="3.40.50.10860">
    <property type="entry name" value="Leucine Dehydrogenase, chain A, domain 1"/>
    <property type="match status" value="1"/>
</dbReference>
<dbReference type="Gene3D" id="3.40.50.720">
    <property type="entry name" value="NAD(P)-binding Rossmann-like Domain"/>
    <property type="match status" value="1"/>
</dbReference>
<dbReference type="HAMAP" id="MF_01576">
    <property type="entry name" value="THF_DHG_CYH"/>
    <property type="match status" value="1"/>
</dbReference>
<dbReference type="InterPro" id="IPR046346">
    <property type="entry name" value="Aminoacid_DH-like_N_sf"/>
</dbReference>
<dbReference type="InterPro" id="IPR036291">
    <property type="entry name" value="NAD(P)-bd_dom_sf"/>
</dbReference>
<dbReference type="InterPro" id="IPR000672">
    <property type="entry name" value="THF_DH/CycHdrlase"/>
</dbReference>
<dbReference type="InterPro" id="IPR020630">
    <property type="entry name" value="THF_DH/CycHdrlase_cat_dom"/>
</dbReference>
<dbReference type="InterPro" id="IPR020867">
    <property type="entry name" value="THF_DH/CycHdrlase_CS"/>
</dbReference>
<dbReference type="InterPro" id="IPR020631">
    <property type="entry name" value="THF_DH/CycHdrlase_NAD-bd_dom"/>
</dbReference>
<dbReference type="NCBIfam" id="NF008058">
    <property type="entry name" value="PRK10792.1"/>
    <property type="match status" value="1"/>
</dbReference>
<dbReference type="NCBIfam" id="NF010783">
    <property type="entry name" value="PRK14186.1"/>
    <property type="match status" value="1"/>
</dbReference>
<dbReference type="PANTHER" id="PTHR48099:SF5">
    <property type="entry name" value="C-1-TETRAHYDROFOLATE SYNTHASE, CYTOPLASMIC"/>
    <property type="match status" value="1"/>
</dbReference>
<dbReference type="PANTHER" id="PTHR48099">
    <property type="entry name" value="C-1-TETRAHYDROFOLATE SYNTHASE, CYTOPLASMIC-RELATED"/>
    <property type="match status" value="1"/>
</dbReference>
<dbReference type="Pfam" id="PF00763">
    <property type="entry name" value="THF_DHG_CYH"/>
    <property type="match status" value="1"/>
</dbReference>
<dbReference type="Pfam" id="PF02882">
    <property type="entry name" value="THF_DHG_CYH_C"/>
    <property type="match status" value="1"/>
</dbReference>
<dbReference type="PRINTS" id="PR00085">
    <property type="entry name" value="THFDHDRGNASE"/>
</dbReference>
<dbReference type="SUPFAM" id="SSF53223">
    <property type="entry name" value="Aminoacid dehydrogenase-like, N-terminal domain"/>
    <property type="match status" value="1"/>
</dbReference>
<dbReference type="SUPFAM" id="SSF51735">
    <property type="entry name" value="NAD(P)-binding Rossmann-fold domains"/>
    <property type="match status" value="1"/>
</dbReference>
<dbReference type="PROSITE" id="PS00766">
    <property type="entry name" value="THF_DHG_CYH_1"/>
    <property type="match status" value="1"/>
</dbReference>
<dbReference type="PROSITE" id="PS00767">
    <property type="entry name" value="THF_DHG_CYH_2"/>
    <property type="match status" value="1"/>
</dbReference>
<reference key="1">
    <citation type="submission" date="2009-07" db="EMBL/GenBank/DDBJ databases">
        <title>Complete sequence of Pectobacterium carotovorum subsp. carotovorum PC1.</title>
        <authorList>
            <consortium name="US DOE Joint Genome Institute"/>
            <person name="Lucas S."/>
            <person name="Copeland A."/>
            <person name="Lapidus A."/>
            <person name="Glavina del Rio T."/>
            <person name="Tice H."/>
            <person name="Bruce D."/>
            <person name="Goodwin L."/>
            <person name="Pitluck S."/>
            <person name="Munk A.C."/>
            <person name="Brettin T."/>
            <person name="Detter J.C."/>
            <person name="Han C."/>
            <person name="Tapia R."/>
            <person name="Larimer F."/>
            <person name="Land M."/>
            <person name="Hauser L."/>
            <person name="Kyrpides N."/>
            <person name="Mikhailova N."/>
            <person name="Balakrishnan V."/>
            <person name="Glasner J."/>
            <person name="Perna N.T."/>
        </authorList>
    </citation>
    <scope>NUCLEOTIDE SEQUENCE [LARGE SCALE GENOMIC DNA]</scope>
    <source>
        <strain>PC1</strain>
    </source>
</reference>
<evidence type="ECO:0000255" key="1">
    <source>
        <dbReference type="HAMAP-Rule" id="MF_01576"/>
    </source>
</evidence>
<protein>
    <recommendedName>
        <fullName evidence="1">Bifunctional protein FolD</fullName>
    </recommendedName>
    <domain>
        <recommendedName>
            <fullName evidence="1">Methylenetetrahydrofolate dehydrogenase</fullName>
            <ecNumber evidence="1">1.5.1.5</ecNumber>
        </recommendedName>
    </domain>
    <domain>
        <recommendedName>
            <fullName evidence="1">Methenyltetrahydrofolate cyclohydrolase</fullName>
            <ecNumber evidence="1">3.5.4.9</ecNumber>
        </recommendedName>
    </domain>
</protein>
<proteinExistence type="inferred from homology"/>